<accession>E9Q355</accession>
<accession>E9PW02</accession>
<accession>E9QAY8</accession>
<accession>Q3V0A1</accession>
<accession>Q8C9D6</accession>
<accession>Q8CAA4</accession>
<accession>Q8R5F0</accession>
<name>CTSG1_MOUSE</name>
<sequence length="1151" mass="132352">MVSRPAMSPVSPVWPRKPNLWAFWVLRLVLLLSLKSWAEDTLQHCTWLLVLNKFEKVGLHLSKDRFQDHEPIDTVAKVFQKLTDSPIDPSENYLSFPYYLQINFSCPGQNSEELARKGHLMGMKPMVRINYMYSVNFYRWEMENLQILMEAAPMRSTGYCPAEAMCILNWYTPMPFKNGSVVSSVDIYTNGIGPFIPKKRFYVNMNGFLKRDASGKSLFAIGYESLVLKSSHFRLSKSRPLWYTVNHAPVFILGGFYDEKAILFSDSNFQDYVLLELSIDSCWVGSFYCPILGFSATIHDAIATESTLFIRQNQLVYYFTGTYSTLFDKSHGSSRWVRVLPSECIKRLCPVYFSGNGSEYVLALTTGKNEGYIHIGTITDGLVSFEMVPDGWSVCEKLPGKNCSIDWATYITDERNLLLLVKIDSGQFYLVNFNTEFKTLNILYKIPEFIPEAKELDFLVLLDTVTYTNTPMTPKGLFFNTLNNMLYIWGNFILQSYNREEFIFLADFPKESTIKYMVNSFKGQMAVVTENEEIWYFLEGGYDVYQVVPSQGWRTYLKLQKMQKSPLYSTNESLVSLFYQDENLFQLVYLFDVGKERLVKRLLPVGTLMEYNLPKPFTVVNQGNYKMITFTNTCPFKAIHAVDVPKKQHASRTESYVALPPLVSESLGFHNNNTLAVYQGLVYYLLWLHSKYDKPYADPVHDPTWRWWQHKTKDKDYFFYLFSNRLAAEGIYINMNAYQKLYNMSGDYGIPDLFFLDKGNWFTFTVVLLSHQDTFTSSDSQGPTINVDKKLSLSLVLADPECLSVTATREFLLNRNTLLTKIKVIDKKRCSEQGMVGRNIKKTSMLIKVLGAPGNCIQRTYLGDHIQGIRLVPIFIGCPPGKRLAFDVSYTIKHSEEINKHYFDCVIKDAEMPCFLFRDLFQPFFLVQDLVTGDSGSFLGSYVLKVVGGGRTLNTIRDYTEEEIFRYNSPLDTTNSLIWKTKVERTTEDKKFYIMSHESPGVEWLCLENSPCYDIIPQSIYPPEFFFKLLVSNRGVDNSTYCDYKLTFIVHIHGLPLSSKRSSFIVMVSTSFFIALVVFYILFCLVWPHIVKAWVSFRWKIHNMMAPETYSSSSSSGGFTLHSHSSEGSFEGPSRPGTKEDNVQAKRAKVA</sequence>
<protein>
    <recommendedName>
        <fullName>Cation channel sperm-associated protein subunit gamma 1</fullName>
    </recommendedName>
</protein>
<feature type="signal peptide" evidence="1">
    <location>
        <begin position="1"/>
        <end position="38"/>
    </location>
</feature>
<feature type="chain" id="PRO_0000416886" description="Cation channel sperm-associated protein subunit gamma 1">
    <location>
        <begin position="39"/>
        <end position="1151"/>
    </location>
</feature>
<feature type="topological domain" description="Extracellular" evidence="1">
    <location>
        <begin position="39"/>
        <end position="1063"/>
    </location>
</feature>
<feature type="transmembrane region" description="Helical" evidence="1">
    <location>
        <begin position="1064"/>
        <end position="1084"/>
    </location>
</feature>
<feature type="topological domain" description="Cytoplasmic" evidence="1">
    <location>
        <begin position="1085"/>
        <end position="1151"/>
    </location>
</feature>
<feature type="region of interest" description="Disordered" evidence="2">
    <location>
        <begin position="1113"/>
        <end position="1151"/>
    </location>
</feature>
<feature type="compositionally biased region" description="Low complexity" evidence="2">
    <location>
        <begin position="1113"/>
        <end position="1123"/>
    </location>
</feature>
<feature type="glycosylation site" description="N-linked (GlcNAc...) asparagine" evidence="1">
    <location>
        <position position="356"/>
    </location>
</feature>
<feature type="splice variant" id="VSP_042983" description="In isoform 3." evidence="4">
    <location>
        <begin position="1"/>
        <end position="120"/>
    </location>
</feature>
<feature type="splice variant" id="VSP_042984" description="In isoform 6." evidence="3">
    <location>
        <begin position="1"/>
        <end position="6"/>
    </location>
</feature>
<feature type="splice variant" id="VSP_042985" description="In isoform 6." evidence="3">
    <location>
        <begin position="57"/>
        <end position="276"/>
    </location>
</feature>
<feature type="splice variant" id="VSP_042986" description="In isoform 4." evidence="4">
    <location>
        <begin position="57"/>
        <end position="91"/>
    </location>
</feature>
<feature type="splice variant" id="VSP_042987" description="In isoform 4 and isoform 5." evidence="4">
    <location>
        <begin position="110"/>
        <end position="276"/>
    </location>
</feature>
<feature type="splice variant" id="VSP_042988" description="In isoform 5." evidence="4">
    <location>
        <begin position="380"/>
        <end position="399"/>
    </location>
</feature>
<feature type="splice variant" id="VSP_042989" description="In isoform 4 and isoform 6." evidence="3 4">
    <original>KNCSIDWATYITDERNLL</original>
    <variation>THFFLCVWGIWNRRVVGL</variation>
    <location>
        <begin position="401"/>
        <end position="418"/>
    </location>
</feature>
<feature type="splice variant" id="VSP_042990" description="In isoform 4 and isoform 6." evidence="3 4">
    <location>
        <begin position="419"/>
        <end position="1151"/>
    </location>
</feature>
<feature type="splice variant" id="VSP_042991" description="In isoform 2 and isoform 3." evidence="4">
    <location>
        <begin position="534"/>
        <end position="586"/>
    </location>
</feature>
<feature type="splice variant" id="VSP_042992" description="In isoform 5." evidence="4">
    <original>IWYFLEGGYDVYQ</original>
    <variation>ELQDDHLHQHVPF</variation>
    <location>
        <begin position="534"/>
        <end position="546"/>
    </location>
</feature>
<feature type="splice variant" id="VSP_042993" description="In isoform 5." evidence="4">
    <location>
        <begin position="547"/>
        <end position="1151"/>
    </location>
</feature>
<feature type="splice variant" id="VSP_042994" description="In isoform 3." evidence="4">
    <location>
        <begin position="974"/>
        <end position="1151"/>
    </location>
</feature>
<feature type="sequence conflict" description="In Ref. 3; AAH22688." evidence="5" ref="3">
    <original>FL</original>
    <variation>VCV</variation>
    <location sequence="E9Q355-6">
        <begin position="178"/>
        <end position="179"/>
    </location>
</feature>
<feature type="sequence conflict" description="In Ref. 3; AAH22688." evidence="5" ref="3">
    <original>W</original>
    <variation>C</variation>
    <location sequence="E9Q355-6">
        <position position="182"/>
    </location>
</feature>
<organism>
    <name type="scientific">Mus musculus</name>
    <name type="common">Mouse</name>
    <dbReference type="NCBI Taxonomy" id="10090"/>
    <lineage>
        <taxon>Eukaryota</taxon>
        <taxon>Metazoa</taxon>
        <taxon>Chordata</taxon>
        <taxon>Craniata</taxon>
        <taxon>Vertebrata</taxon>
        <taxon>Euteleostomi</taxon>
        <taxon>Mammalia</taxon>
        <taxon>Eutheria</taxon>
        <taxon>Euarchontoglires</taxon>
        <taxon>Glires</taxon>
        <taxon>Rodentia</taxon>
        <taxon>Myomorpha</taxon>
        <taxon>Muroidea</taxon>
        <taxon>Muridae</taxon>
        <taxon>Murinae</taxon>
        <taxon>Mus</taxon>
        <taxon>Mus</taxon>
    </lineage>
</organism>
<keyword id="KW-0025">Alternative splicing</keyword>
<keyword id="KW-0325">Glycoprotein</keyword>
<keyword id="KW-0472">Membrane</keyword>
<keyword id="KW-1185">Reference proteome</keyword>
<keyword id="KW-0732">Signal</keyword>
<keyword id="KW-0812">Transmembrane</keyword>
<keyword id="KW-1133">Transmembrane helix</keyword>
<dbReference type="EMBL" id="AK039202">
    <property type="protein sequence ID" value="BAC30276.1"/>
    <property type="molecule type" value="mRNA"/>
</dbReference>
<dbReference type="EMBL" id="AK042364">
    <property type="protein sequence ID" value="BAC31237.1"/>
    <property type="molecule type" value="mRNA"/>
</dbReference>
<dbReference type="EMBL" id="AK133307">
    <property type="protein sequence ID" value="BAE21603.1"/>
    <property type="molecule type" value="mRNA"/>
</dbReference>
<dbReference type="EMBL" id="AC164564">
    <property type="status" value="NOT_ANNOTATED_CDS"/>
    <property type="molecule type" value="Genomic_DNA"/>
</dbReference>
<dbReference type="EMBL" id="BC022688">
    <property type="protein sequence ID" value="AAH22688.1"/>
    <property type="molecule type" value="mRNA"/>
</dbReference>
<dbReference type="CCDS" id="CCDS52170.1">
    <molecule id="E9Q355-2"/>
</dbReference>
<dbReference type="CCDS" id="CCDS90197.1">
    <molecule id="E9Q355-1"/>
</dbReference>
<dbReference type="RefSeq" id="NP_001158130.1">
    <molecule id="E9Q355-2"/>
    <property type="nucleotide sequence ID" value="NM_001164658.1"/>
</dbReference>
<dbReference type="RefSeq" id="NP_001355336.1">
    <molecule id="E9Q355-1"/>
    <property type="nucleotide sequence ID" value="NM_001368407.1"/>
</dbReference>
<dbReference type="RefSeq" id="XP_006540154.1">
    <molecule id="E9Q355-1"/>
    <property type="nucleotide sequence ID" value="XM_006540091.4"/>
</dbReference>
<dbReference type="SMR" id="E9Q355"/>
<dbReference type="FunCoup" id="E9Q355">
    <property type="interactions" value="60"/>
</dbReference>
<dbReference type="STRING" id="10090.ENSMUSP00000045233"/>
<dbReference type="GlyCosmos" id="E9Q355">
    <property type="glycosylation" value="1 site, No reported glycans"/>
</dbReference>
<dbReference type="GlyGen" id="E9Q355">
    <property type="glycosylation" value="1 site"/>
</dbReference>
<dbReference type="PhosphoSitePlus" id="E9Q355"/>
<dbReference type="SwissPalm" id="E9Q355"/>
<dbReference type="jPOST" id="E9Q355"/>
<dbReference type="PaxDb" id="10090-ENSMUSP00000129837"/>
<dbReference type="PeptideAtlas" id="E9Q355"/>
<dbReference type="ProteomicsDB" id="285223">
    <molecule id="E9Q355-1"/>
</dbReference>
<dbReference type="ProteomicsDB" id="285224">
    <molecule id="E9Q355-2"/>
</dbReference>
<dbReference type="ProteomicsDB" id="285225">
    <molecule id="E9Q355-3"/>
</dbReference>
<dbReference type="ProteomicsDB" id="285227">
    <molecule id="E9Q355-5"/>
</dbReference>
<dbReference type="Ensembl" id="ENSMUST00000047846.13">
    <molecule id="E9Q355-2"/>
    <property type="protein sequence ID" value="ENSMUSP00000045233.7"/>
    <property type="gene ID" value="ENSMUSG00000049676.15"/>
</dbReference>
<dbReference type="Ensembl" id="ENSMUST00000069861.4">
    <molecule id="E9Q355-4"/>
    <property type="protein sequence ID" value="ENSMUSP00000067388.4"/>
    <property type="gene ID" value="ENSMUSG00000049676.15"/>
</dbReference>
<dbReference type="Ensembl" id="ENSMUST00000164653.8">
    <molecule id="E9Q355-5"/>
    <property type="protein sequence ID" value="ENSMUSP00000131827.2"/>
    <property type="gene ID" value="ENSMUSG00000049676.15"/>
</dbReference>
<dbReference type="Ensembl" id="ENSMUST00000169143.8">
    <molecule id="E9Q355-1"/>
    <property type="protein sequence ID" value="ENSMUSP00000129837.2"/>
    <property type="gene ID" value="ENSMUSG00000049676.15"/>
</dbReference>
<dbReference type="GeneID" id="320225"/>
<dbReference type="KEGG" id="mmu:320225"/>
<dbReference type="UCSC" id="uc009gbe.1">
    <molecule id="E9Q355-4"/>
    <property type="organism name" value="mouse"/>
</dbReference>
<dbReference type="UCSC" id="uc012fhe.1">
    <molecule id="E9Q355-2"/>
    <property type="organism name" value="mouse"/>
</dbReference>
<dbReference type="AGR" id="MGI:2443617"/>
<dbReference type="CTD" id="320225"/>
<dbReference type="MGI" id="MGI:2443617">
    <property type="gene designation" value="Catsperg1"/>
</dbReference>
<dbReference type="VEuPathDB" id="HostDB:ENSMUSG00000049676"/>
<dbReference type="eggNOG" id="ENOG502QWAR">
    <property type="taxonomic scope" value="Eukaryota"/>
</dbReference>
<dbReference type="GeneTree" id="ENSGT00390000014139"/>
<dbReference type="HOGENOM" id="CLU_010744_0_0_1"/>
<dbReference type="InParanoid" id="E9Q355"/>
<dbReference type="OMA" id="WRWWKNR"/>
<dbReference type="OrthoDB" id="9949093at2759"/>
<dbReference type="PhylomeDB" id="E9Q355"/>
<dbReference type="TreeFam" id="TF337337"/>
<dbReference type="Reactome" id="R-MMU-1300642">
    <property type="pathway name" value="Sperm Motility And Taxes"/>
</dbReference>
<dbReference type="BioGRID-ORCS" id="320225">
    <property type="hits" value="1 hit in 61 CRISPR screens"/>
</dbReference>
<dbReference type="ChiTaRS" id="Catsperg1">
    <property type="organism name" value="mouse"/>
</dbReference>
<dbReference type="PRO" id="PR:E9Q355"/>
<dbReference type="Proteomes" id="UP000000589">
    <property type="component" value="Chromosome 7"/>
</dbReference>
<dbReference type="RNAct" id="E9Q355">
    <property type="molecule type" value="protein"/>
</dbReference>
<dbReference type="Bgee" id="ENSMUSG00000049676">
    <property type="expression patterns" value="Expressed in testis and 59 other cell types or tissues"/>
</dbReference>
<dbReference type="ExpressionAtlas" id="E9Q355">
    <property type="expression patterns" value="baseline and differential"/>
</dbReference>
<dbReference type="GO" id="GO:0036128">
    <property type="term" value="C:CatSper complex"/>
    <property type="evidence" value="ECO:0007669"/>
    <property type="project" value="InterPro"/>
</dbReference>
<dbReference type="GO" id="GO:0097228">
    <property type="term" value="C:sperm principal piece"/>
    <property type="evidence" value="ECO:0007669"/>
    <property type="project" value="InterPro"/>
</dbReference>
<dbReference type="InterPro" id="IPR028246">
    <property type="entry name" value="CATSPERG"/>
</dbReference>
<dbReference type="InterPro" id="IPR053871">
    <property type="entry name" value="CATSPERG_b-prop"/>
</dbReference>
<dbReference type="InterPro" id="IPR053873">
    <property type="entry name" value="CATSPERG_C"/>
</dbReference>
<dbReference type="InterPro" id="IPR053874">
    <property type="entry name" value="CATSPERG_Ig-like"/>
</dbReference>
<dbReference type="InterPro" id="IPR053872">
    <property type="entry name" value="CATSPERG_N"/>
</dbReference>
<dbReference type="PANTHER" id="PTHR14327:SF1">
    <property type="entry name" value="CATION CHANNEL SPERM-ASSOCIATED AUXILIARY SUBUNIT GAMMA"/>
    <property type="match status" value="1"/>
</dbReference>
<dbReference type="PANTHER" id="PTHR14327">
    <property type="entry name" value="CATION CHANNEL SPERM-ASSOCIATED PROTEIN SUBUNIT GAMMA"/>
    <property type="match status" value="1"/>
</dbReference>
<dbReference type="Pfam" id="PF15064">
    <property type="entry name" value="CATSPERG_beta-prop"/>
    <property type="match status" value="1"/>
</dbReference>
<dbReference type="Pfam" id="PF22846">
    <property type="entry name" value="CATSPERG_C"/>
    <property type="match status" value="1"/>
</dbReference>
<dbReference type="Pfam" id="PF22851">
    <property type="entry name" value="CATSPERG_Ig-like"/>
    <property type="match status" value="1"/>
</dbReference>
<dbReference type="Pfam" id="PF22840">
    <property type="entry name" value="CATSPERG_NTD"/>
    <property type="match status" value="1"/>
</dbReference>
<proteinExistence type="evidence at transcript level"/>
<evidence type="ECO:0000255" key="1"/>
<evidence type="ECO:0000256" key="2">
    <source>
        <dbReference type="SAM" id="MobiDB-lite"/>
    </source>
</evidence>
<evidence type="ECO:0000303" key="3">
    <source>
    </source>
</evidence>
<evidence type="ECO:0000303" key="4">
    <source>
    </source>
</evidence>
<evidence type="ECO:0000305" key="5"/>
<gene>
    <name type="primary">Catsperg1</name>
</gene>
<comment type="subcellular location">
    <subcellularLocation>
        <location evidence="5">Membrane</location>
        <topology evidence="5">Single-pass type I membrane protein</topology>
    </subcellularLocation>
</comment>
<comment type="alternative products">
    <event type="alternative splicing"/>
    <isoform>
        <id>E9Q355-1</id>
        <name>1</name>
        <sequence type="displayed"/>
    </isoform>
    <isoform>
        <id>E9Q355-2</id>
        <name>2</name>
        <sequence type="described" ref="VSP_042991"/>
    </isoform>
    <isoform>
        <id>E9Q355-3</id>
        <name>3</name>
        <sequence type="described" ref="VSP_042983 VSP_042991 VSP_042994"/>
    </isoform>
    <isoform>
        <id>E9Q355-4</id>
        <name>4</name>
        <sequence type="described" ref="VSP_042986 VSP_042987 VSP_042989 VSP_042990"/>
    </isoform>
    <isoform>
        <id>E9Q355-5</id>
        <name>5</name>
        <sequence type="described" ref="VSP_042987 VSP_042988 VSP_042992 VSP_042993"/>
    </isoform>
    <isoform>
        <id>E9Q355-6</id>
        <name>6</name>
        <sequence type="described" ref="VSP_042984 VSP_042985 VSP_042989 VSP_042990"/>
    </isoform>
</comment>
<comment type="similarity">
    <text evidence="5">Belongs to the CATSPERG family.</text>
</comment>
<comment type="caution">
    <text evidence="5">Despite its name, it is unclear whether the protein is part of some Catsper complex: in contrast to Catsperg2, it has not been identified in the Catsper complex and its expression is not restricted to testis tissues.</text>
</comment>
<reference key="1">
    <citation type="journal article" date="2005" name="Science">
        <title>The transcriptional landscape of the mammalian genome.</title>
        <authorList>
            <person name="Carninci P."/>
            <person name="Kasukawa T."/>
            <person name="Katayama S."/>
            <person name="Gough J."/>
            <person name="Frith M.C."/>
            <person name="Maeda N."/>
            <person name="Oyama R."/>
            <person name="Ravasi T."/>
            <person name="Lenhard B."/>
            <person name="Wells C."/>
            <person name="Kodzius R."/>
            <person name="Shimokawa K."/>
            <person name="Bajic V.B."/>
            <person name="Brenner S.E."/>
            <person name="Batalov S."/>
            <person name="Forrest A.R."/>
            <person name="Zavolan M."/>
            <person name="Davis M.J."/>
            <person name="Wilming L.G."/>
            <person name="Aidinis V."/>
            <person name="Allen J.E."/>
            <person name="Ambesi-Impiombato A."/>
            <person name="Apweiler R."/>
            <person name="Aturaliya R.N."/>
            <person name="Bailey T.L."/>
            <person name="Bansal M."/>
            <person name="Baxter L."/>
            <person name="Beisel K.W."/>
            <person name="Bersano T."/>
            <person name="Bono H."/>
            <person name="Chalk A.M."/>
            <person name="Chiu K.P."/>
            <person name="Choudhary V."/>
            <person name="Christoffels A."/>
            <person name="Clutterbuck D.R."/>
            <person name="Crowe M.L."/>
            <person name="Dalla E."/>
            <person name="Dalrymple B.P."/>
            <person name="de Bono B."/>
            <person name="Della Gatta G."/>
            <person name="di Bernardo D."/>
            <person name="Down T."/>
            <person name="Engstrom P."/>
            <person name="Fagiolini M."/>
            <person name="Faulkner G."/>
            <person name="Fletcher C.F."/>
            <person name="Fukushima T."/>
            <person name="Furuno M."/>
            <person name="Futaki S."/>
            <person name="Gariboldi M."/>
            <person name="Georgii-Hemming P."/>
            <person name="Gingeras T.R."/>
            <person name="Gojobori T."/>
            <person name="Green R.E."/>
            <person name="Gustincich S."/>
            <person name="Harbers M."/>
            <person name="Hayashi Y."/>
            <person name="Hensch T.K."/>
            <person name="Hirokawa N."/>
            <person name="Hill D."/>
            <person name="Huminiecki L."/>
            <person name="Iacono M."/>
            <person name="Ikeo K."/>
            <person name="Iwama A."/>
            <person name="Ishikawa T."/>
            <person name="Jakt M."/>
            <person name="Kanapin A."/>
            <person name="Katoh M."/>
            <person name="Kawasawa Y."/>
            <person name="Kelso J."/>
            <person name="Kitamura H."/>
            <person name="Kitano H."/>
            <person name="Kollias G."/>
            <person name="Krishnan S.P."/>
            <person name="Kruger A."/>
            <person name="Kummerfeld S.K."/>
            <person name="Kurochkin I.V."/>
            <person name="Lareau L.F."/>
            <person name="Lazarevic D."/>
            <person name="Lipovich L."/>
            <person name="Liu J."/>
            <person name="Liuni S."/>
            <person name="McWilliam S."/>
            <person name="Madan Babu M."/>
            <person name="Madera M."/>
            <person name="Marchionni L."/>
            <person name="Matsuda H."/>
            <person name="Matsuzawa S."/>
            <person name="Miki H."/>
            <person name="Mignone F."/>
            <person name="Miyake S."/>
            <person name="Morris K."/>
            <person name="Mottagui-Tabar S."/>
            <person name="Mulder N."/>
            <person name="Nakano N."/>
            <person name="Nakauchi H."/>
            <person name="Ng P."/>
            <person name="Nilsson R."/>
            <person name="Nishiguchi S."/>
            <person name="Nishikawa S."/>
            <person name="Nori F."/>
            <person name="Ohara O."/>
            <person name="Okazaki Y."/>
            <person name="Orlando V."/>
            <person name="Pang K.C."/>
            <person name="Pavan W.J."/>
            <person name="Pavesi G."/>
            <person name="Pesole G."/>
            <person name="Petrovsky N."/>
            <person name="Piazza S."/>
            <person name="Reed J."/>
            <person name="Reid J.F."/>
            <person name="Ring B.Z."/>
            <person name="Ringwald M."/>
            <person name="Rost B."/>
            <person name="Ruan Y."/>
            <person name="Salzberg S.L."/>
            <person name="Sandelin A."/>
            <person name="Schneider C."/>
            <person name="Schoenbach C."/>
            <person name="Sekiguchi K."/>
            <person name="Semple C.A."/>
            <person name="Seno S."/>
            <person name="Sessa L."/>
            <person name="Sheng Y."/>
            <person name="Shibata Y."/>
            <person name="Shimada H."/>
            <person name="Shimada K."/>
            <person name="Silva D."/>
            <person name="Sinclair B."/>
            <person name="Sperling S."/>
            <person name="Stupka E."/>
            <person name="Sugiura K."/>
            <person name="Sultana R."/>
            <person name="Takenaka Y."/>
            <person name="Taki K."/>
            <person name="Tammoja K."/>
            <person name="Tan S.L."/>
            <person name="Tang S."/>
            <person name="Taylor M.S."/>
            <person name="Tegner J."/>
            <person name="Teichmann S.A."/>
            <person name="Ueda H.R."/>
            <person name="van Nimwegen E."/>
            <person name="Verardo R."/>
            <person name="Wei C.L."/>
            <person name="Yagi K."/>
            <person name="Yamanishi H."/>
            <person name="Zabarovsky E."/>
            <person name="Zhu S."/>
            <person name="Zimmer A."/>
            <person name="Hide W."/>
            <person name="Bult C."/>
            <person name="Grimmond S.M."/>
            <person name="Teasdale R.D."/>
            <person name="Liu E.T."/>
            <person name="Brusic V."/>
            <person name="Quackenbush J."/>
            <person name="Wahlestedt C."/>
            <person name="Mattick J.S."/>
            <person name="Hume D.A."/>
            <person name="Kai C."/>
            <person name="Sasaki D."/>
            <person name="Tomaru Y."/>
            <person name="Fukuda S."/>
            <person name="Kanamori-Katayama M."/>
            <person name="Suzuki M."/>
            <person name="Aoki J."/>
            <person name="Arakawa T."/>
            <person name="Iida J."/>
            <person name="Imamura K."/>
            <person name="Itoh M."/>
            <person name="Kato T."/>
            <person name="Kawaji H."/>
            <person name="Kawagashira N."/>
            <person name="Kawashima T."/>
            <person name="Kojima M."/>
            <person name="Kondo S."/>
            <person name="Konno H."/>
            <person name="Nakano K."/>
            <person name="Ninomiya N."/>
            <person name="Nishio T."/>
            <person name="Okada M."/>
            <person name="Plessy C."/>
            <person name="Shibata K."/>
            <person name="Shiraki T."/>
            <person name="Suzuki S."/>
            <person name="Tagami M."/>
            <person name="Waki K."/>
            <person name="Watahiki A."/>
            <person name="Okamura-Oho Y."/>
            <person name="Suzuki H."/>
            <person name="Kawai J."/>
            <person name="Hayashizaki Y."/>
        </authorList>
    </citation>
    <scope>NUCLEOTIDE SEQUENCE [LARGE SCALE MRNA] (ISOFORMS 3; 4 AND 5)</scope>
    <source>
        <strain>C57BL/6J</strain>
        <tissue>Hypothalamus</tissue>
        <tissue>Testis</tissue>
        <tissue>Thymus</tissue>
    </source>
</reference>
<reference key="2">
    <citation type="journal article" date="2009" name="PLoS Biol.">
        <title>Lineage-specific biology revealed by a finished genome assembly of the mouse.</title>
        <authorList>
            <person name="Church D.M."/>
            <person name="Goodstadt L."/>
            <person name="Hillier L.W."/>
            <person name="Zody M.C."/>
            <person name="Goldstein S."/>
            <person name="She X."/>
            <person name="Bult C.J."/>
            <person name="Agarwala R."/>
            <person name="Cherry J.L."/>
            <person name="DiCuccio M."/>
            <person name="Hlavina W."/>
            <person name="Kapustin Y."/>
            <person name="Meric P."/>
            <person name="Maglott D."/>
            <person name="Birtle Z."/>
            <person name="Marques A.C."/>
            <person name="Graves T."/>
            <person name="Zhou S."/>
            <person name="Teague B."/>
            <person name="Potamousis K."/>
            <person name="Churas C."/>
            <person name="Place M."/>
            <person name="Herschleb J."/>
            <person name="Runnheim R."/>
            <person name="Forrest D."/>
            <person name="Amos-Landgraf J."/>
            <person name="Schwartz D.C."/>
            <person name="Cheng Z."/>
            <person name="Lindblad-Toh K."/>
            <person name="Eichler E.E."/>
            <person name="Ponting C.P."/>
        </authorList>
    </citation>
    <scope>NUCLEOTIDE SEQUENCE [LARGE SCALE GENOMIC DNA]</scope>
    <source>
        <strain>C57BL/6J</strain>
    </source>
</reference>
<reference key="3">
    <citation type="journal article" date="2004" name="Genome Res.">
        <title>The status, quality, and expansion of the NIH full-length cDNA project: the Mammalian Gene Collection (MGC).</title>
        <authorList>
            <consortium name="The MGC Project Team"/>
        </authorList>
    </citation>
    <scope>NUCLEOTIDE SEQUENCE [LARGE SCALE MRNA] (ISOFORM 6)</scope>
    <source>
        <strain>FVB/N</strain>
        <tissue>Mammary tumor</tissue>
    </source>
</reference>